<reference key="1">
    <citation type="journal article" date="2001" name="Science">
        <title>The genome of the natural genetic engineer Agrobacterium tumefaciens C58.</title>
        <authorList>
            <person name="Wood D.W."/>
            <person name="Setubal J.C."/>
            <person name="Kaul R."/>
            <person name="Monks D.E."/>
            <person name="Kitajima J.P."/>
            <person name="Okura V.K."/>
            <person name="Zhou Y."/>
            <person name="Chen L."/>
            <person name="Wood G.E."/>
            <person name="Almeida N.F. Jr."/>
            <person name="Woo L."/>
            <person name="Chen Y."/>
            <person name="Paulsen I.T."/>
            <person name="Eisen J.A."/>
            <person name="Karp P.D."/>
            <person name="Bovee D. Sr."/>
            <person name="Chapman P."/>
            <person name="Clendenning J."/>
            <person name="Deatherage G."/>
            <person name="Gillet W."/>
            <person name="Grant C."/>
            <person name="Kutyavin T."/>
            <person name="Levy R."/>
            <person name="Li M.-J."/>
            <person name="McClelland E."/>
            <person name="Palmieri A."/>
            <person name="Raymond C."/>
            <person name="Rouse G."/>
            <person name="Saenphimmachak C."/>
            <person name="Wu Z."/>
            <person name="Romero P."/>
            <person name="Gordon D."/>
            <person name="Zhang S."/>
            <person name="Yoo H."/>
            <person name="Tao Y."/>
            <person name="Biddle P."/>
            <person name="Jung M."/>
            <person name="Krespan W."/>
            <person name="Perry M."/>
            <person name="Gordon-Kamm B."/>
            <person name="Liao L."/>
            <person name="Kim S."/>
            <person name="Hendrick C."/>
            <person name="Zhao Z.-Y."/>
            <person name="Dolan M."/>
            <person name="Chumley F."/>
            <person name="Tingey S.V."/>
            <person name="Tomb J.-F."/>
            <person name="Gordon M.P."/>
            <person name="Olson M.V."/>
            <person name="Nester E.W."/>
        </authorList>
    </citation>
    <scope>NUCLEOTIDE SEQUENCE [LARGE SCALE GENOMIC DNA]</scope>
    <source>
        <strain>C58 / ATCC 33970</strain>
    </source>
</reference>
<reference key="2">
    <citation type="journal article" date="2001" name="Science">
        <title>Genome sequence of the plant pathogen and biotechnology agent Agrobacterium tumefaciens C58.</title>
        <authorList>
            <person name="Goodner B."/>
            <person name="Hinkle G."/>
            <person name="Gattung S."/>
            <person name="Miller N."/>
            <person name="Blanchard M."/>
            <person name="Qurollo B."/>
            <person name="Goldman B.S."/>
            <person name="Cao Y."/>
            <person name="Askenazi M."/>
            <person name="Halling C."/>
            <person name="Mullin L."/>
            <person name="Houmiel K."/>
            <person name="Gordon J."/>
            <person name="Vaudin M."/>
            <person name="Iartchouk O."/>
            <person name="Epp A."/>
            <person name="Liu F."/>
            <person name="Wollam C."/>
            <person name="Allinger M."/>
            <person name="Doughty D."/>
            <person name="Scott C."/>
            <person name="Lappas C."/>
            <person name="Markelz B."/>
            <person name="Flanagan C."/>
            <person name="Crowell C."/>
            <person name="Gurson J."/>
            <person name="Lomo C."/>
            <person name="Sear C."/>
            <person name="Strub G."/>
            <person name="Cielo C."/>
            <person name="Slater S."/>
        </authorList>
    </citation>
    <scope>NUCLEOTIDE SEQUENCE [LARGE SCALE GENOMIC DNA]</scope>
    <source>
        <strain>C58 / ATCC 33970</strain>
    </source>
</reference>
<accession>Q8UA46</accession>
<feature type="chain" id="PRO_0000170659" description="Mannonate dehydratase 2">
    <location>
        <begin position="1"/>
        <end position="397"/>
    </location>
</feature>
<sequence length="397" mass="43649">MKETWRWFGESDPITLEHVRQTGASGVVTALHQIPDGTAWPAEEIAKRKAMIEAAGLEWSVCESIPMEQSIKRGDADAPKAIARWKDTLSRLGRAGVPVVCYNFMPVVDWTRTNLRWQARNTGLALRFEMADFVAYDVFILKRIRAAENYDPALVARAEERFAQMSEDEQSLLERNIIAGLPGGALVQTRQSIAALIASFDGIDSATMQGNLLAFLKEVVPVAEEVGVHLGIHPDDPPFSLFGLPRVVSTPADIRAILSAVESPNNGITLCTGSYGARSDNDLVAMAKEFASRVNFAHLRNVTVEADGSFFEDDHLDGGADMIGVIEALLREERSTAKAGRRTNIPMRPDHGHLLGDDITKKTNPGYSYIGRMKGLGELRGVIRTIERQLRREEAAA</sequence>
<keyword id="KW-0408">Iron</keyword>
<keyword id="KW-0456">Lyase</keyword>
<keyword id="KW-0464">Manganese</keyword>
<keyword id="KW-1185">Reference proteome</keyword>
<organism>
    <name type="scientific">Agrobacterium fabrum (strain C58 / ATCC 33970)</name>
    <name type="common">Agrobacterium tumefaciens (strain C58)</name>
    <dbReference type="NCBI Taxonomy" id="176299"/>
    <lineage>
        <taxon>Bacteria</taxon>
        <taxon>Pseudomonadati</taxon>
        <taxon>Pseudomonadota</taxon>
        <taxon>Alphaproteobacteria</taxon>
        <taxon>Hyphomicrobiales</taxon>
        <taxon>Rhizobiaceae</taxon>
        <taxon>Rhizobium/Agrobacterium group</taxon>
        <taxon>Agrobacterium</taxon>
        <taxon>Agrobacterium tumefaciens complex</taxon>
    </lineage>
</organism>
<name>UXUA2_AGRFC</name>
<comment type="function">
    <text evidence="1">Catalyzes the dehydration of D-mannonate.</text>
</comment>
<comment type="catalytic activity">
    <reaction>
        <text>D-mannonate = 2-dehydro-3-deoxy-D-gluconate + H2O</text>
        <dbReference type="Rhea" id="RHEA:20097"/>
        <dbReference type="ChEBI" id="CHEBI:15377"/>
        <dbReference type="ChEBI" id="CHEBI:17767"/>
        <dbReference type="ChEBI" id="CHEBI:57990"/>
        <dbReference type="EC" id="4.2.1.8"/>
    </reaction>
</comment>
<comment type="cofactor">
    <cofactor evidence="1">
        <name>Fe(2+)</name>
        <dbReference type="ChEBI" id="CHEBI:29033"/>
    </cofactor>
    <cofactor evidence="1">
        <name>Mn(2+)</name>
        <dbReference type="ChEBI" id="CHEBI:29035"/>
    </cofactor>
</comment>
<comment type="pathway">
    <text>Carbohydrate metabolism; pentose and glucuronate interconversion.</text>
</comment>
<comment type="similarity">
    <text evidence="2">Belongs to the mannonate dehydratase family.</text>
</comment>
<protein>
    <recommendedName>
        <fullName>Mannonate dehydratase 2</fullName>
        <ecNumber>4.2.1.8</ecNumber>
    </recommendedName>
    <alternativeName>
        <fullName>D-mannonate hydro-lyase 2</fullName>
    </alternativeName>
</protein>
<proteinExistence type="inferred from homology"/>
<evidence type="ECO:0000250" key="1"/>
<evidence type="ECO:0000305" key="2"/>
<gene>
    <name type="primary">uxuA2</name>
    <name type="ordered locus">Atu3529</name>
    <name type="ORF">AGR_L_2605</name>
</gene>
<dbReference type="EC" id="4.2.1.8"/>
<dbReference type="EMBL" id="AE007870">
    <property type="protein sequence ID" value="AAK89868.1"/>
    <property type="molecule type" value="Genomic_DNA"/>
</dbReference>
<dbReference type="PIR" id="AG2990">
    <property type="entry name" value="AG2990"/>
</dbReference>
<dbReference type="PIR" id="B98293">
    <property type="entry name" value="B98293"/>
</dbReference>
<dbReference type="RefSeq" id="NP_357083.1">
    <property type="nucleotide sequence ID" value="NC_003063.2"/>
</dbReference>
<dbReference type="RefSeq" id="WP_010973116.1">
    <property type="nucleotide sequence ID" value="NC_003063.2"/>
</dbReference>
<dbReference type="SMR" id="Q8UA46"/>
<dbReference type="STRING" id="176299.Atu3529"/>
<dbReference type="EnsemblBacteria" id="AAK89868">
    <property type="protein sequence ID" value="AAK89868"/>
    <property type="gene ID" value="Atu3529"/>
</dbReference>
<dbReference type="GeneID" id="1135403"/>
<dbReference type="KEGG" id="atu:Atu3529"/>
<dbReference type="PATRIC" id="fig|176299.10.peg.3370"/>
<dbReference type="eggNOG" id="COG1312">
    <property type="taxonomic scope" value="Bacteria"/>
</dbReference>
<dbReference type="HOGENOM" id="CLU_058621_2_0_5"/>
<dbReference type="OrthoDB" id="9780250at2"/>
<dbReference type="PhylomeDB" id="Q8UA46"/>
<dbReference type="BioCyc" id="AGRO:ATU3529-MONOMER"/>
<dbReference type="UniPathway" id="UPA00246"/>
<dbReference type="Proteomes" id="UP000000813">
    <property type="component" value="Chromosome linear"/>
</dbReference>
<dbReference type="GO" id="GO:0008198">
    <property type="term" value="F:ferrous iron binding"/>
    <property type="evidence" value="ECO:0007669"/>
    <property type="project" value="TreeGrafter"/>
</dbReference>
<dbReference type="GO" id="GO:0030145">
    <property type="term" value="F:manganese ion binding"/>
    <property type="evidence" value="ECO:0007669"/>
    <property type="project" value="TreeGrafter"/>
</dbReference>
<dbReference type="GO" id="GO:0008927">
    <property type="term" value="F:mannonate dehydratase activity"/>
    <property type="evidence" value="ECO:0007669"/>
    <property type="project" value="UniProtKB-UniRule"/>
</dbReference>
<dbReference type="GO" id="GO:0042840">
    <property type="term" value="P:D-glucuronate catabolic process"/>
    <property type="evidence" value="ECO:0007669"/>
    <property type="project" value="TreeGrafter"/>
</dbReference>
<dbReference type="Gene3D" id="3.20.20.150">
    <property type="entry name" value="Divalent-metal-dependent TIM barrel enzymes"/>
    <property type="match status" value="1"/>
</dbReference>
<dbReference type="HAMAP" id="MF_00106">
    <property type="entry name" value="UxuA"/>
    <property type="match status" value="1"/>
</dbReference>
<dbReference type="InterPro" id="IPR004628">
    <property type="entry name" value="Man_deHydtase"/>
</dbReference>
<dbReference type="InterPro" id="IPR036237">
    <property type="entry name" value="Xyl_isomerase-like_sf"/>
</dbReference>
<dbReference type="NCBIfam" id="NF003027">
    <property type="entry name" value="PRK03906.1"/>
    <property type="match status" value="1"/>
</dbReference>
<dbReference type="NCBIfam" id="TIGR00695">
    <property type="entry name" value="uxuA"/>
    <property type="match status" value="1"/>
</dbReference>
<dbReference type="PANTHER" id="PTHR30387">
    <property type="entry name" value="MANNONATE DEHYDRATASE"/>
    <property type="match status" value="1"/>
</dbReference>
<dbReference type="PANTHER" id="PTHR30387:SF2">
    <property type="entry name" value="MANNONATE DEHYDRATASE"/>
    <property type="match status" value="1"/>
</dbReference>
<dbReference type="Pfam" id="PF03786">
    <property type="entry name" value="UxuA"/>
    <property type="match status" value="1"/>
</dbReference>
<dbReference type="PIRSF" id="PIRSF016049">
    <property type="entry name" value="Man_dehyd"/>
    <property type="match status" value="1"/>
</dbReference>
<dbReference type="SUPFAM" id="SSF51658">
    <property type="entry name" value="Xylose isomerase-like"/>
    <property type="match status" value="1"/>
</dbReference>